<organismHost>
    <name type="scientific">Aves</name>
    <dbReference type="NCBI Taxonomy" id="8782"/>
</organismHost>
<organismHost>
    <name type="scientific">Homo sapiens</name>
    <name type="common">Human</name>
    <dbReference type="NCBI Taxonomy" id="9606"/>
</organismHost>
<organismHost>
    <name type="scientific">Sus scrofa</name>
    <name type="common">Pig</name>
    <dbReference type="NCBI Taxonomy" id="9823"/>
</organismHost>
<organism>
    <name type="scientific">Influenza A virus (strain A/USSR/90/1977 H1N1)</name>
    <dbReference type="NCBI Taxonomy" id="381516"/>
    <lineage>
        <taxon>Viruses</taxon>
        <taxon>Riboviria</taxon>
        <taxon>Orthornavirae</taxon>
        <taxon>Negarnaviricota</taxon>
        <taxon>Polyploviricotina</taxon>
        <taxon>Insthoviricetes</taxon>
        <taxon>Articulavirales</taxon>
        <taxon>Orthomyxoviridae</taxon>
        <taxon>Alphainfluenzavirus</taxon>
        <taxon>Alphainfluenzavirus influenzae</taxon>
        <taxon>Influenza A virus</taxon>
    </lineage>
</organism>
<name>RDRP_I77AB</name>
<evidence type="ECO:0000250" key="1">
    <source>
        <dbReference type="UniProtKB" id="P03431"/>
    </source>
</evidence>
<evidence type="ECO:0000255" key="2">
    <source>
        <dbReference type="HAMAP-Rule" id="MF_04065"/>
    </source>
</evidence>
<evidence type="ECO:0000256" key="3">
    <source>
        <dbReference type="SAM" id="MobiDB-lite"/>
    </source>
</evidence>
<feature type="chain" id="PRO_0000279618" description="RNA-directed RNA polymerase catalytic subunit">
    <location>
        <begin position="1"/>
        <end position="757"/>
    </location>
</feature>
<feature type="domain" description="RdRp catalytic" evidence="2">
    <location>
        <begin position="286"/>
        <end position="483"/>
    </location>
</feature>
<feature type="region of interest" description="Disordered" evidence="3">
    <location>
        <begin position="53"/>
        <end position="82"/>
    </location>
</feature>
<feature type="region of interest" description="Promoter-binding site" evidence="2">
    <location>
        <begin position="249"/>
        <end position="256"/>
    </location>
</feature>
<feature type="short sequence motif" description="Nuclear localization signal" evidence="2">
    <location>
        <begin position="187"/>
        <end position="195"/>
    </location>
</feature>
<feature type="short sequence motif" description="Nuclear localization signal" evidence="2">
    <location>
        <begin position="203"/>
        <end position="216"/>
    </location>
</feature>
<accession>Q1WP01</accession>
<keyword id="KW-1262">Eukaryotic host gene expression shutoff by virus</keyword>
<keyword id="KW-1191">Eukaryotic host transcription shutoff by virus</keyword>
<keyword id="KW-1035">Host cytoplasm</keyword>
<keyword id="KW-1190">Host gene expression shutoff by virus</keyword>
<keyword id="KW-1048">Host nucleus</keyword>
<keyword id="KW-0945">Host-virus interaction</keyword>
<keyword id="KW-1104">Inhibition of host RNA polymerase II by virus</keyword>
<keyword id="KW-0547">Nucleotide-binding</keyword>
<keyword id="KW-0548">Nucleotidyltransferase</keyword>
<keyword id="KW-0597">Phosphoprotein</keyword>
<keyword id="KW-0696">RNA-directed RNA polymerase</keyword>
<keyword id="KW-0808">Transferase</keyword>
<keyword id="KW-0693">Viral RNA replication</keyword>
<keyword id="KW-1195">Viral transcription</keyword>
<proteinExistence type="inferred from homology"/>
<sequence length="757" mass="86576">MDVNPTLLFLKVPAQNAISTTFPYTGDPPYSHGTGTGYTMDTVNRTHQYSERGRWTKNTETGAPQLNPIDGPLPKDNEPSGYAQTDCVLEAMAFLEESHPGIFENSCIETMEVVQQTRVDKLTQGRQTYDWTLNRNQPAATALANTIEVFRSNGLMANESGRLIDFLKDVMESMDREEVEITTHFQRKRRVRDNVTKKMVTQRTIGKKKQRLNKRSYLIRALTLNTMTKDAERGKLKRRAIATPGMQIRGFVYFVETLARSICEKLEQSGLPVGGNEKKAKLANVVRKMMTNSQDTEISFTITGDNTKWNENQNPRMFLAMITYITRNQPEWFRNILSIAPIMFSNKMARLGKGYMFESKSMKLRTQIPAEMLANIDLKYFNDSTRKKIEKIRPLLIDGTASLSPGMMMGMFNMLSTVLGVSILNLGQKRYTKTTYWWDGLQSSDDFALIVNAPNHAGIQAGVDRFYRTCKLLGINMSKKKSYINRTGTFEFTSFFYRYGFVANFSMELPSFGVSGINESADMSIGVTVIKNNMINNDLGPATAQMALQLFIKDYRYTYRCHRGDTQIQTRRSFEIKKLWEQTRSKAGLLVSDGGPNLYNIRNLHIPEVCLKWELMDEDYQGRLCNPLNPFVSHKEIESVNNAVMMPAHGPAKNMEYDAVATTHSWVPKRNRSILNTSQRGILEDEQMYQRCCNLFEKFFPSSSYRRPVGISSMVEAMVSRARIDARIDFESGRIKKEEFTEIMKTCSTIEELRRQK</sequence>
<protein>
    <recommendedName>
        <fullName evidence="2">RNA-directed RNA polymerase catalytic subunit</fullName>
        <ecNumber evidence="2">2.7.7.48</ecNumber>
    </recommendedName>
    <alternativeName>
        <fullName evidence="2">Polymerase basic protein 1</fullName>
        <shortName evidence="2">PB1</shortName>
    </alternativeName>
    <alternativeName>
        <fullName evidence="2">RNA-directed RNA polymerase subunit P1</fullName>
    </alternativeName>
</protein>
<gene>
    <name evidence="2" type="primary">PB1</name>
</gene>
<reference key="1">
    <citation type="submission" date="2006-03" db="EMBL/GenBank/DDBJ databases">
        <title>The NIAID influenza genome sequencing project.</title>
        <authorList>
            <person name="Ghedin E."/>
            <person name="Spiro D."/>
            <person name="Miller N."/>
            <person name="Zaborsky J."/>
            <person name="Feldblyum T."/>
            <person name="Subbu V."/>
            <person name="Shumway M."/>
            <person name="Sparenborg J."/>
            <person name="Groveman L."/>
            <person name="Halpin R."/>
            <person name="Sitz J."/>
            <person name="Koo H."/>
            <person name="Salzberg S.L."/>
            <person name="Webster R.G."/>
            <person name="Hoffmann E."/>
            <person name="Krauss S."/>
            <person name="Naeve C."/>
            <person name="Bao Y."/>
            <person name="Bolotov P."/>
            <person name="Dernovoy D."/>
            <person name="Kiryutin B."/>
            <person name="Lipman D.J."/>
            <person name="Tatusova T."/>
        </authorList>
    </citation>
    <scope>NUCLEOTIDE SEQUENCE [GENOMIC RNA]</scope>
</reference>
<reference key="2">
    <citation type="submission" date="2006-04" db="EMBL/GenBank/DDBJ databases">
        <title>Complete genome sequencing and analysis of selected influenza virus vaccine strains spanning six decades (1933-1999).</title>
        <authorList>
            <person name="Mbawuike I.N."/>
            <person name="Zhang Y."/>
            <person name="Yamada R.E."/>
            <person name="Nino D."/>
            <person name="Bui H.-H."/>
            <person name="Sette A."/>
            <person name="Couch R.B."/>
        </authorList>
    </citation>
    <scope>NUCLEOTIDE SEQUENCE [GENOMIC RNA]</scope>
</reference>
<dbReference type="EC" id="2.7.7.48" evidence="2"/>
<dbReference type="EMBL" id="CY010378">
    <property type="protein sequence ID" value="ABD95358.1"/>
    <property type="molecule type" value="Genomic_RNA"/>
</dbReference>
<dbReference type="EMBL" id="DQ508895">
    <property type="protein sequence ID" value="ABF21249.1"/>
    <property type="molecule type" value="Genomic_RNA"/>
</dbReference>
<dbReference type="SMR" id="Q1WP01"/>
<dbReference type="Proteomes" id="UP000007793">
    <property type="component" value="Genome"/>
</dbReference>
<dbReference type="Proteomes" id="UP000121508">
    <property type="component" value="Genome"/>
</dbReference>
<dbReference type="GO" id="GO:0030430">
    <property type="term" value="C:host cell cytoplasm"/>
    <property type="evidence" value="ECO:0007669"/>
    <property type="project" value="UniProtKB-SubCell"/>
</dbReference>
<dbReference type="GO" id="GO:0042025">
    <property type="term" value="C:host cell nucleus"/>
    <property type="evidence" value="ECO:0007669"/>
    <property type="project" value="UniProtKB-SubCell"/>
</dbReference>
<dbReference type="GO" id="GO:0000166">
    <property type="term" value="F:nucleotide binding"/>
    <property type="evidence" value="ECO:0007669"/>
    <property type="project" value="UniProtKB-UniRule"/>
</dbReference>
<dbReference type="GO" id="GO:0003723">
    <property type="term" value="F:RNA binding"/>
    <property type="evidence" value="ECO:0007669"/>
    <property type="project" value="InterPro"/>
</dbReference>
<dbReference type="GO" id="GO:0003968">
    <property type="term" value="F:RNA-directed RNA polymerase activity"/>
    <property type="evidence" value="ECO:0007669"/>
    <property type="project" value="UniProtKB-UniRule"/>
</dbReference>
<dbReference type="GO" id="GO:0006351">
    <property type="term" value="P:DNA-templated transcription"/>
    <property type="evidence" value="ECO:0007669"/>
    <property type="project" value="UniProtKB-UniRule"/>
</dbReference>
<dbReference type="GO" id="GO:0039657">
    <property type="term" value="P:symbiont-mediated suppression of host gene expression"/>
    <property type="evidence" value="ECO:0007669"/>
    <property type="project" value="UniProtKB-KW"/>
</dbReference>
<dbReference type="GO" id="GO:0039523">
    <property type="term" value="P:symbiont-mediated suppression of host mRNA transcription via inhibition of RNA polymerase II activity"/>
    <property type="evidence" value="ECO:0007669"/>
    <property type="project" value="UniProtKB-UniRule"/>
</dbReference>
<dbReference type="GO" id="GO:0039694">
    <property type="term" value="P:viral RNA genome replication"/>
    <property type="evidence" value="ECO:0007669"/>
    <property type="project" value="UniProtKB-UniRule"/>
</dbReference>
<dbReference type="GO" id="GO:0019083">
    <property type="term" value="P:viral transcription"/>
    <property type="evidence" value="ECO:0007669"/>
    <property type="project" value="UniProtKB-KW"/>
</dbReference>
<dbReference type="Gene3D" id="6.10.140.720">
    <property type="match status" value="1"/>
</dbReference>
<dbReference type="HAMAP" id="MF_04065">
    <property type="entry name" value="INFV_RDRP"/>
    <property type="match status" value="1"/>
</dbReference>
<dbReference type="InterPro" id="IPR007099">
    <property type="entry name" value="RNA-dir_pol_NSvirus"/>
</dbReference>
<dbReference type="InterPro" id="IPR001407">
    <property type="entry name" value="RNA_pol_PB1_influenza"/>
</dbReference>
<dbReference type="Pfam" id="PF00602">
    <property type="entry name" value="Flu_PB1"/>
    <property type="match status" value="1"/>
</dbReference>
<dbReference type="PIRSF" id="PIRSF000827">
    <property type="entry name" value="RdRPol_OMV"/>
    <property type="match status" value="1"/>
</dbReference>
<dbReference type="PROSITE" id="PS50525">
    <property type="entry name" value="RDRP_SSRNA_NEG_SEG"/>
    <property type="match status" value="1"/>
</dbReference>
<comment type="function">
    <text evidence="2">RNA-dependent RNA polymerase which is responsible for replication and transcription of virus RNA segments. The transcription of viral mRNAs occurs by a unique mechanism called cap-snatching. 5' methylated caps of cellular mRNAs are cleaved after 10-13 nucleotides by PA. In turn, these short capped RNAs are used as primers by PB1 for transcription of viral mRNAs. During virus replication, PB1 initiates RNA synthesis and copy vRNA into complementary RNA (cRNA) which in turn serves as a template for the production of more vRNAs.</text>
</comment>
<comment type="catalytic activity">
    <reaction evidence="2">
        <text>RNA(n) + a ribonucleoside 5'-triphosphate = RNA(n+1) + diphosphate</text>
        <dbReference type="Rhea" id="RHEA:21248"/>
        <dbReference type="Rhea" id="RHEA-COMP:14527"/>
        <dbReference type="Rhea" id="RHEA-COMP:17342"/>
        <dbReference type="ChEBI" id="CHEBI:33019"/>
        <dbReference type="ChEBI" id="CHEBI:61557"/>
        <dbReference type="ChEBI" id="CHEBI:140395"/>
        <dbReference type="EC" id="2.7.7.48"/>
    </reaction>
</comment>
<comment type="subunit">
    <text evidence="1 2">Influenza RNA polymerase is composed of three subunits: PB1, PB2 and PA. Interacts (via N-terminus) with PA (via C-terminus). Interacts (via C-terminus) with PB2 (via N-terminus); this interaction is essential for transcription initiation. Interacts (via C-terminus) with human PKP2 (via N-terminus); the interaction competitively inhibits the interaction between the RNA polymerase subunits PB1 and PB2 (By similarity).</text>
</comment>
<comment type="subcellular location">
    <subcellularLocation>
        <location evidence="2">Host nucleus</location>
    </subcellularLocation>
    <subcellularLocation>
        <location evidence="2">Host cytoplasm</location>
    </subcellularLocation>
</comment>
<comment type="PTM">
    <text evidence="2">Phosphorylated by host PRKCA.</text>
</comment>
<comment type="similarity">
    <text evidence="2">Belongs to the influenza viruses polymerase PB1 family.</text>
</comment>